<reference key="1">
    <citation type="journal article" date="2011" name="Proc. Natl. Acad. Sci. U.S.A.">
        <title>Genomic anatomy of Escherichia coli O157:H7 outbreaks.</title>
        <authorList>
            <person name="Eppinger M."/>
            <person name="Mammel M.K."/>
            <person name="Leclerc J.E."/>
            <person name="Ravel J."/>
            <person name="Cebula T.A."/>
        </authorList>
    </citation>
    <scope>NUCLEOTIDE SEQUENCE [LARGE SCALE GENOMIC DNA]</scope>
    <source>
        <strain>EC4115 / EHEC</strain>
    </source>
</reference>
<sequence>MNQTLLSSFGTPFERVENALAALREGRGVMVLDDEDRENEGDMIFPAETMTVEQMALTIRHGSGIVCLCITEDRRKQLDLPMMVENNTSAYGTGFTVTIEAAEGVTTGVSAADRITTVRAAIADGAKPSDLNRPGHVFPLRAQAGGVLTRGGHTEATIDLMTLAGFKPAGVLCELTNDDGTMARAPECIEFANKHNMALVTIEDLVAYRQAHERKAS</sequence>
<dbReference type="EC" id="4.1.99.12" evidence="1"/>
<dbReference type="EMBL" id="CP001164">
    <property type="protein sequence ID" value="ACI35956.1"/>
    <property type="molecule type" value="Genomic_DNA"/>
</dbReference>
<dbReference type="RefSeq" id="WP_001076997.1">
    <property type="nucleotide sequence ID" value="NC_011353.1"/>
</dbReference>
<dbReference type="SMR" id="B5YR87"/>
<dbReference type="GeneID" id="93778953"/>
<dbReference type="KEGG" id="ecf:ECH74115_4355"/>
<dbReference type="HOGENOM" id="CLU_020273_3_0_6"/>
<dbReference type="UniPathway" id="UPA00275">
    <property type="reaction ID" value="UER00399"/>
</dbReference>
<dbReference type="GO" id="GO:0005829">
    <property type="term" value="C:cytosol"/>
    <property type="evidence" value="ECO:0007669"/>
    <property type="project" value="TreeGrafter"/>
</dbReference>
<dbReference type="GO" id="GO:0008686">
    <property type="term" value="F:3,4-dihydroxy-2-butanone-4-phosphate synthase activity"/>
    <property type="evidence" value="ECO:0007669"/>
    <property type="project" value="UniProtKB-UniRule"/>
</dbReference>
<dbReference type="GO" id="GO:0000287">
    <property type="term" value="F:magnesium ion binding"/>
    <property type="evidence" value="ECO:0007669"/>
    <property type="project" value="UniProtKB-UniRule"/>
</dbReference>
<dbReference type="GO" id="GO:0030145">
    <property type="term" value="F:manganese ion binding"/>
    <property type="evidence" value="ECO:0007669"/>
    <property type="project" value="UniProtKB-UniRule"/>
</dbReference>
<dbReference type="GO" id="GO:0009231">
    <property type="term" value="P:riboflavin biosynthetic process"/>
    <property type="evidence" value="ECO:0007669"/>
    <property type="project" value="UniProtKB-UniRule"/>
</dbReference>
<dbReference type="FunFam" id="3.90.870.10:FF:000002">
    <property type="entry name" value="3,4-dihydroxy-2-butanone 4-phosphate synthase"/>
    <property type="match status" value="1"/>
</dbReference>
<dbReference type="Gene3D" id="3.90.870.10">
    <property type="entry name" value="DHBP synthase"/>
    <property type="match status" value="1"/>
</dbReference>
<dbReference type="HAMAP" id="MF_00180">
    <property type="entry name" value="RibB"/>
    <property type="match status" value="1"/>
</dbReference>
<dbReference type="InterPro" id="IPR017945">
    <property type="entry name" value="DHBP_synth_RibB-like_a/b_dom"/>
</dbReference>
<dbReference type="InterPro" id="IPR000422">
    <property type="entry name" value="DHBP_synthase_RibB"/>
</dbReference>
<dbReference type="NCBIfam" id="TIGR00506">
    <property type="entry name" value="ribB"/>
    <property type="match status" value="1"/>
</dbReference>
<dbReference type="PANTHER" id="PTHR21327:SF38">
    <property type="entry name" value="3,4-DIHYDROXY-2-BUTANONE 4-PHOSPHATE SYNTHASE"/>
    <property type="match status" value="1"/>
</dbReference>
<dbReference type="PANTHER" id="PTHR21327">
    <property type="entry name" value="GTP CYCLOHYDROLASE II-RELATED"/>
    <property type="match status" value="1"/>
</dbReference>
<dbReference type="Pfam" id="PF00926">
    <property type="entry name" value="DHBP_synthase"/>
    <property type="match status" value="1"/>
</dbReference>
<dbReference type="SUPFAM" id="SSF55821">
    <property type="entry name" value="YrdC/RibB"/>
    <property type="match status" value="1"/>
</dbReference>
<accession>B5YR87</accession>
<feature type="chain" id="PRO_1000098277" description="3,4-dihydroxy-2-butanone 4-phosphate synthase">
    <location>
        <begin position="1"/>
        <end position="217"/>
    </location>
</feature>
<feature type="binding site" evidence="1">
    <location>
        <begin position="37"/>
        <end position="38"/>
    </location>
    <ligand>
        <name>D-ribulose 5-phosphate</name>
        <dbReference type="ChEBI" id="CHEBI:58121"/>
    </ligand>
</feature>
<feature type="binding site" evidence="1">
    <location>
        <position position="38"/>
    </location>
    <ligand>
        <name>Mg(2+)</name>
        <dbReference type="ChEBI" id="CHEBI:18420"/>
        <label>1</label>
    </ligand>
</feature>
<feature type="binding site" evidence="1">
    <location>
        <position position="38"/>
    </location>
    <ligand>
        <name>Mg(2+)</name>
        <dbReference type="ChEBI" id="CHEBI:18420"/>
        <label>2</label>
    </ligand>
</feature>
<feature type="binding site" evidence="1">
    <location>
        <position position="42"/>
    </location>
    <ligand>
        <name>D-ribulose 5-phosphate</name>
        <dbReference type="ChEBI" id="CHEBI:58121"/>
    </ligand>
</feature>
<feature type="binding site" evidence="1">
    <location>
        <begin position="150"/>
        <end position="154"/>
    </location>
    <ligand>
        <name>D-ribulose 5-phosphate</name>
        <dbReference type="ChEBI" id="CHEBI:58121"/>
    </ligand>
</feature>
<feature type="binding site" evidence="1">
    <location>
        <position position="153"/>
    </location>
    <ligand>
        <name>Mg(2+)</name>
        <dbReference type="ChEBI" id="CHEBI:18420"/>
        <label>2</label>
    </ligand>
</feature>
<feature type="binding site" evidence="1">
    <location>
        <position position="174"/>
    </location>
    <ligand>
        <name>D-ribulose 5-phosphate</name>
        <dbReference type="ChEBI" id="CHEBI:58121"/>
    </ligand>
</feature>
<feature type="site" description="Essential for catalytic activity" evidence="1">
    <location>
        <position position="136"/>
    </location>
</feature>
<feature type="site" description="Essential for catalytic activity" evidence="1">
    <location>
        <position position="174"/>
    </location>
</feature>
<gene>
    <name evidence="1" type="primary">ribB</name>
    <name type="ordered locus">ECH74115_4355</name>
</gene>
<organism>
    <name type="scientific">Escherichia coli O157:H7 (strain EC4115 / EHEC)</name>
    <dbReference type="NCBI Taxonomy" id="444450"/>
    <lineage>
        <taxon>Bacteria</taxon>
        <taxon>Pseudomonadati</taxon>
        <taxon>Pseudomonadota</taxon>
        <taxon>Gammaproteobacteria</taxon>
        <taxon>Enterobacterales</taxon>
        <taxon>Enterobacteriaceae</taxon>
        <taxon>Escherichia</taxon>
    </lineage>
</organism>
<proteinExistence type="inferred from homology"/>
<name>RIBB_ECO5E</name>
<comment type="function">
    <text evidence="1">Catalyzes the conversion of D-ribulose 5-phosphate to formate and 3,4-dihydroxy-2-butanone 4-phosphate.</text>
</comment>
<comment type="catalytic activity">
    <reaction evidence="1">
        <text>D-ribulose 5-phosphate = (2S)-2-hydroxy-3-oxobutyl phosphate + formate + H(+)</text>
        <dbReference type="Rhea" id="RHEA:18457"/>
        <dbReference type="ChEBI" id="CHEBI:15378"/>
        <dbReference type="ChEBI" id="CHEBI:15740"/>
        <dbReference type="ChEBI" id="CHEBI:58121"/>
        <dbReference type="ChEBI" id="CHEBI:58830"/>
        <dbReference type="EC" id="4.1.99.12"/>
    </reaction>
</comment>
<comment type="cofactor">
    <cofactor evidence="1">
        <name>Mg(2+)</name>
        <dbReference type="ChEBI" id="CHEBI:18420"/>
    </cofactor>
    <cofactor evidence="1">
        <name>Mn(2+)</name>
        <dbReference type="ChEBI" id="CHEBI:29035"/>
    </cofactor>
    <text evidence="1">Binds 2 divalent metal cations per subunit. Magnesium or manganese.</text>
</comment>
<comment type="pathway">
    <text evidence="1">Cofactor biosynthesis; riboflavin biosynthesis; 2-hydroxy-3-oxobutyl phosphate from D-ribulose 5-phosphate: step 1/1.</text>
</comment>
<comment type="subunit">
    <text evidence="1">Homodimer.</text>
</comment>
<comment type="similarity">
    <text evidence="1">Belongs to the DHBP synthase family.</text>
</comment>
<protein>
    <recommendedName>
        <fullName evidence="1">3,4-dihydroxy-2-butanone 4-phosphate synthase</fullName>
        <shortName evidence="1">DHBP synthase</shortName>
        <ecNumber evidence="1">4.1.99.12</ecNumber>
    </recommendedName>
</protein>
<keyword id="KW-0456">Lyase</keyword>
<keyword id="KW-0460">Magnesium</keyword>
<keyword id="KW-0464">Manganese</keyword>
<keyword id="KW-0479">Metal-binding</keyword>
<keyword id="KW-0686">Riboflavin biosynthesis</keyword>
<evidence type="ECO:0000255" key="1">
    <source>
        <dbReference type="HAMAP-Rule" id="MF_00180"/>
    </source>
</evidence>